<organism>
    <name type="scientific">Gallus gallus</name>
    <name type="common">Chicken</name>
    <dbReference type="NCBI Taxonomy" id="9031"/>
    <lineage>
        <taxon>Eukaryota</taxon>
        <taxon>Metazoa</taxon>
        <taxon>Chordata</taxon>
        <taxon>Craniata</taxon>
        <taxon>Vertebrata</taxon>
        <taxon>Euteleostomi</taxon>
        <taxon>Archelosauria</taxon>
        <taxon>Archosauria</taxon>
        <taxon>Dinosauria</taxon>
        <taxon>Saurischia</taxon>
        <taxon>Theropoda</taxon>
        <taxon>Coelurosauria</taxon>
        <taxon>Aves</taxon>
        <taxon>Neognathae</taxon>
        <taxon>Galloanserae</taxon>
        <taxon>Galliformes</taxon>
        <taxon>Phasianidae</taxon>
        <taxon>Phasianinae</taxon>
        <taxon>Gallus</taxon>
    </lineage>
</organism>
<name>RABP2_CHICK</name>
<proteinExistence type="evidence at protein level"/>
<accession>P30370</accession>
<sequence>MPNFSGNWKMKSSENFEELLKALGVNMMLRKIAVAAA</sequence>
<comment type="function">
    <text evidence="1">Transports retinoic acid to the nucleus. Regulates the access of retinoic acid to the nuclear retinoic acid receptors (By similarity).</text>
</comment>
<comment type="subcellular location">
    <subcellularLocation>
        <location>Cytoplasm</location>
    </subcellularLocation>
    <subcellularLocation>
        <location evidence="1">Endoplasmic reticulum</location>
    </subcellularLocation>
    <subcellularLocation>
        <location evidence="1">Nucleus</location>
    </subcellularLocation>
    <text evidence="1">Upon ligand binding, a conformation change exposes a nuclear localization motif and the protein is transported into the nucleus.</text>
</comment>
<comment type="tissue specificity">
    <text>Embryo.</text>
</comment>
<comment type="domain">
    <text evidence="1">Forms a beta-barrel structure that accommodates hydrophobic ligands in its interior.</text>
</comment>
<comment type="similarity">
    <text evidence="3">Belongs to the calycin superfamily. Fatty-acid binding protein (FABP) family.</text>
</comment>
<protein>
    <recommendedName>
        <fullName>Cellular retinoic acid-binding protein 2</fullName>
    </recommendedName>
    <alternativeName>
        <fullName>Cellular retinoic acid-binding protein II</fullName>
        <shortName>CRABP-II</shortName>
    </alternativeName>
</protein>
<feature type="initiator methionine" description="Removed" evidence="2">
    <location>
        <position position="1"/>
    </location>
</feature>
<feature type="chain" id="PRO_0000067418" description="Cellular retinoic acid-binding protein 2">
    <location>
        <begin position="2"/>
        <end position="37" status="greater than"/>
    </location>
</feature>
<feature type="short sequence motif" description="Nuclear localization signal" evidence="1">
    <location>
        <begin position="21"/>
        <end position="31"/>
    </location>
</feature>
<feature type="non-terminal residue">
    <location>
        <position position="37"/>
    </location>
</feature>
<gene>
    <name type="primary">CRABP2</name>
</gene>
<evidence type="ECO:0000250" key="1"/>
<evidence type="ECO:0000269" key="2">
    <source>
    </source>
</evidence>
<evidence type="ECO:0000305" key="3"/>
<dbReference type="PIR" id="B31872">
    <property type="entry name" value="B31872"/>
</dbReference>
<dbReference type="SMR" id="P30370"/>
<dbReference type="FunCoup" id="P30370">
    <property type="interactions" value="51"/>
</dbReference>
<dbReference type="PaxDb" id="9031-ENSGALP00000042960"/>
<dbReference type="eggNOG" id="KOG4015">
    <property type="taxonomic scope" value="Eukaryota"/>
</dbReference>
<dbReference type="HOGENOM" id="CLU_113772_9_0_1"/>
<dbReference type="InParanoid" id="P30370"/>
<dbReference type="OrthoDB" id="195110at2759"/>
<dbReference type="Proteomes" id="UP000000539">
    <property type="component" value="Unassembled WGS sequence"/>
</dbReference>
<dbReference type="GO" id="GO:0005783">
    <property type="term" value="C:endoplasmic reticulum"/>
    <property type="evidence" value="ECO:0007669"/>
    <property type="project" value="UniProtKB-SubCell"/>
</dbReference>
<dbReference type="GO" id="GO:0005634">
    <property type="term" value="C:nucleus"/>
    <property type="evidence" value="ECO:0007669"/>
    <property type="project" value="UniProtKB-SubCell"/>
</dbReference>
<dbReference type="GO" id="GO:0016918">
    <property type="term" value="F:retinal binding"/>
    <property type="evidence" value="ECO:0007669"/>
    <property type="project" value="UniProtKB-KW"/>
</dbReference>
<dbReference type="GO" id="GO:0019841">
    <property type="term" value="F:retinol binding"/>
    <property type="evidence" value="ECO:0007669"/>
    <property type="project" value="UniProtKB-KW"/>
</dbReference>
<dbReference type="Gene3D" id="2.40.128.20">
    <property type="match status" value="1"/>
</dbReference>
<dbReference type="InterPro" id="IPR012674">
    <property type="entry name" value="Calycin"/>
</dbReference>
<dbReference type="InterPro" id="IPR000463">
    <property type="entry name" value="Fatty_acid-bd"/>
</dbReference>
<dbReference type="InterPro" id="IPR031259">
    <property type="entry name" value="ILBP"/>
</dbReference>
<dbReference type="PANTHER" id="PTHR11955">
    <property type="entry name" value="FATTY ACID BINDING PROTEIN"/>
    <property type="match status" value="1"/>
</dbReference>
<dbReference type="SUPFAM" id="SSF50814">
    <property type="entry name" value="Lipocalins"/>
    <property type="match status" value="1"/>
</dbReference>
<dbReference type="PROSITE" id="PS00214">
    <property type="entry name" value="FABP"/>
    <property type="match status" value="1"/>
</dbReference>
<keyword id="KW-0963">Cytoplasm</keyword>
<keyword id="KW-0903">Direct protein sequencing</keyword>
<keyword id="KW-0256">Endoplasmic reticulum</keyword>
<keyword id="KW-0539">Nucleus</keyword>
<keyword id="KW-1185">Reference proteome</keyword>
<keyword id="KW-0683">Retinol-binding</keyword>
<keyword id="KW-0813">Transport</keyword>
<keyword id="KW-0845">Vitamin A</keyword>
<reference key="1">
    <citation type="journal article" date="1988" name="Biochem. Biophys. Res. Commun.">
        <title>The presence of a novel cellular retinoic acid-binding protein in chick embryos: purification and partial characterization.</title>
        <authorList>
            <person name="Kitamoto T."/>
            <person name="Momoi T."/>
            <person name="Momoi M."/>
        </authorList>
    </citation>
    <scope>PROTEIN SEQUENCE OF 2-37</scope>
</reference>
<reference key="2">
    <citation type="journal article" date="1989" name="Biochem. Biophys. Res. Commun.">
        <authorList>
            <person name="Kitamoto T."/>
            <person name="Momoi T."/>
            <person name="Momoi M."/>
        </authorList>
    </citation>
    <scope>ERRATUM OF PUBMED:2849937</scope>
</reference>